<feature type="chain" id="PRO_0000104122" description="Protein Rv3402c">
    <location>
        <begin position="1"/>
        <end position="412"/>
    </location>
</feature>
<feature type="modified residue" description="N6-(pyridoxal phosphate)lysine" evidence="1">
    <location>
        <position position="227"/>
    </location>
</feature>
<organism>
    <name type="scientific">Mycobacterium tuberculosis (strain ATCC 25618 / H37Rv)</name>
    <dbReference type="NCBI Taxonomy" id="83332"/>
    <lineage>
        <taxon>Bacteria</taxon>
        <taxon>Bacillati</taxon>
        <taxon>Actinomycetota</taxon>
        <taxon>Actinomycetes</taxon>
        <taxon>Mycobacteriales</taxon>
        <taxon>Mycobacteriaceae</taxon>
        <taxon>Mycobacterium</taxon>
        <taxon>Mycobacterium tuberculosis complex</taxon>
    </lineage>
</organism>
<evidence type="ECO:0000250" key="1"/>
<evidence type="ECO:0000269" key="2">
    <source>
    </source>
</evidence>
<evidence type="ECO:0000305" key="3"/>
<protein>
    <recommendedName>
        <fullName>Protein Rv3402c</fullName>
    </recommendedName>
</protein>
<reference key="1">
    <citation type="journal article" date="1998" name="Nature">
        <title>Deciphering the biology of Mycobacterium tuberculosis from the complete genome sequence.</title>
        <authorList>
            <person name="Cole S.T."/>
            <person name="Brosch R."/>
            <person name="Parkhill J."/>
            <person name="Garnier T."/>
            <person name="Churcher C.M."/>
            <person name="Harris D.E."/>
            <person name="Gordon S.V."/>
            <person name="Eiglmeier K."/>
            <person name="Gas S."/>
            <person name="Barry C.E. III"/>
            <person name="Tekaia F."/>
            <person name="Badcock K."/>
            <person name="Basham D."/>
            <person name="Brown D."/>
            <person name="Chillingworth T."/>
            <person name="Connor R."/>
            <person name="Davies R.M."/>
            <person name="Devlin K."/>
            <person name="Feltwell T."/>
            <person name="Gentles S."/>
            <person name="Hamlin N."/>
            <person name="Holroyd S."/>
            <person name="Hornsby T."/>
            <person name="Jagels K."/>
            <person name="Krogh A."/>
            <person name="McLean J."/>
            <person name="Moule S."/>
            <person name="Murphy L.D."/>
            <person name="Oliver S."/>
            <person name="Osborne J."/>
            <person name="Quail M.A."/>
            <person name="Rajandream M.A."/>
            <person name="Rogers J."/>
            <person name="Rutter S."/>
            <person name="Seeger K."/>
            <person name="Skelton S."/>
            <person name="Squares S."/>
            <person name="Squares R."/>
            <person name="Sulston J.E."/>
            <person name="Taylor K."/>
            <person name="Whitehead S."/>
            <person name="Barrell B.G."/>
        </authorList>
    </citation>
    <scope>NUCLEOTIDE SEQUENCE [LARGE SCALE GENOMIC DNA]</scope>
    <source>
        <strain>ATCC 25618 / H37Rv</strain>
    </source>
</reference>
<reference key="2">
    <citation type="journal article" date="2001" name="Mol. Microbiol.">
        <title>The Mycobacterium tuberculosis IdeR is a dual functional regulator that controls transcription of genes involved in iron acquisition, iron storage and survival in macrophages.</title>
        <authorList>
            <person name="Gold B."/>
            <person name="Rodriguez G.M."/>
            <person name="Marras S.A.E."/>
            <person name="Pentecost M."/>
            <person name="Smith I."/>
        </authorList>
    </citation>
    <scope>INDUCTION</scope>
    <source>
        <strain>ATCC 25618 / H37Rv</strain>
    </source>
</reference>
<sequence length="412" mass="44897">MKIRTLSGSVLEPPSAVRATPGTSMLKLEPGGSTIPKIPFIRPSFPGPAELAEDFVQIAQANWYTNFGPNERRFARALRDYLGPHLHVATLANGTLALLAALHVSFGAGTRDRYLLMPSFTFVGVAQAALWTGYRPWFIDIDANTWQPCVHSARAVIERFRDRIAGILLANVFGVGNPQISVWEELAAEWELPIVLDSAAGFGSTYADGERLGGRGACEIFSFHATKPFAVGEGGALVSRDPRLVEHAYKFQNFGLVQTRESIQLGMNGKLSEISAAIGLRQLVGLDRRLASRRKVLECYRTGMADAGVRFQDNANVASLCFASACCTSADHKAAVLGSLRRHAIEARDYYNPPQHRHPYFVTNAELVESTDLAVTADICSRIVSLPVHDHMAPDDVARVVAAVQEAEVRGE</sequence>
<dbReference type="EMBL" id="AL123456">
    <property type="protein sequence ID" value="CCP46224.1"/>
    <property type="molecule type" value="Genomic_DNA"/>
</dbReference>
<dbReference type="PIR" id="G70735">
    <property type="entry name" value="G70735"/>
</dbReference>
<dbReference type="RefSeq" id="NP_217919.1">
    <property type="nucleotide sequence ID" value="NC_000962.3"/>
</dbReference>
<dbReference type="RefSeq" id="WP_003900048.1">
    <property type="nucleotide sequence ID" value="NZ_NVQJ01000027.1"/>
</dbReference>
<dbReference type="SMR" id="P9WGJ7"/>
<dbReference type="FunCoup" id="P9WGJ7">
    <property type="interactions" value="10"/>
</dbReference>
<dbReference type="STRING" id="83332.Rv3402c"/>
<dbReference type="PaxDb" id="83332-Rv3402c"/>
<dbReference type="DNASU" id="887910"/>
<dbReference type="GeneID" id="887910"/>
<dbReference type="KEGG" id="mtu:Rv3402c"/>
<dbReference type="KEGG" id="mtv:RVBD_3402c"/>
<dbReference type="TubercuList" id="Rv3402c"/>
<dbReference type="eggNOG" id="COG0399">
    <property type="taxonomic scope" value="Bacteria"/>
</dbReference>
<dbReference type="InParanoid" id="P9WGJ7"/>
<dbReference type="OrthoDB" id="9804264at2"/>
<dbReference type="PhylomeDB" id="P9WGJ7"/>
<dbReference type="Proteomes" id="UP000001584">
    <property type="component" value="Chromosome"/>
</dbReference>
<dbReference type="GO" id="GO:0005576">
    <property type="term" value="C:extracellular region"/>
    <property type="evidence" value="ECO:0007005"/>
    <property type="project" value="MTBBASE"/>
</dbReference>
<dbReference type="GO" id="GO:0030170">
    <property type="term" value="F:pyridoxal phosphate binding"/>
    <property type="evidence" value="ECO:0000318"/>
    <property type="project" value="GO_Central"/>
</dbReference>
<dbReference type="GO" id="GO:0008483">
    <property type="term" value="F:transaminase activity"/>
    <property type="evidence" value="ECO:0000318"/>
    <property type="project" value="GO_Central"/>
</dbReference>
<dbReference type="GO" id="GO:0010106">
    <property type="term" value="P:cellular response to iron ion starvation"/>
    <property type="evidence" value="ECO:0000270"/>
    <property type="project" value="MTBBASE"/>
</dbReference>
<dbReference type="GO" id="GO:0044847">
    <property type="term" value="P:iron acquisition from host"/>
    <property type="evidence" value="ECO:0000270"/>
    <property type="project" value="MTBBASE"/>
</dbReference>
<dbReference type="GO" id="GO:0000271">
    <property type="term" value="P:polysaccharide biosynthetic process"/>
    <property type="evidence" value="ECO:0000318"/>
    <property type="project" value="GO_Central"/>
</dbReference>
<dbReference type="CDD" id="cd00616">
    <property type="entry name" value="AHBA_syn"/>
    <property type="match status" value="1"/>
</dbReference>
<dbReference type="Gene3D" id="3.40.640.10">
    <property type="entry name" value="Type I PLP-dependent aspartate aminotransferase-like (Major domain)"/>
    <property type="match status" value="1"/>
</dbReference>
<dbReference type="InterPro" id="IPR000653">
    <property type="entry name" value="DegT/StrS_aminotransferase"/>
</dbReference>
<dbReference type="InterPro" id="IPR015424">
    <property type="entry name" value="PyrdxlP-dep_Trfase"/>
</dbReference>
<dbReference type="InterPro" id="IPR015421">
    <property type="entry name" value="PyrdxlP-dep_Trfase_major"/>
</dbReference>
<dbReference type="PANTHER" id="PTHR30244:SF9">
    <property type="entry name" value="PROTEIN RV3402C"/>
    <property type="match status" value="1"/>
</dbReference>
<dbReference type="PANTHER" id="PTHR30244">
    <property type="entry name" value="TRANSAMINASE"/>
    <property type="match status" value="1"/>
</dbReference>
<dbReference type="Pfam" id="PF01041">
    <property type="entry name" value="DegT_DnrJ_EryC1"/>
    <property type="match status" value="1"/>
</dbReference>
<dbReference type="PIRSF" id="PIRSF000390">
    <property type="entry name" value="PLP_StrS"/>
    <property type="match status" value="1"/>
</dbReference>
<dbReference type="SUPFAM" id="SSF53383">
    <property type="entry name" value="PLP-dependent transferases"/>
    <property type="match status" value="1"/>
</dbReference>
<comment type="induction">
    <text evidence="2">Transcriptionally repressed by IdeR and iron. Induced during infection of human THP-1 macrophages.</text>
</comment>
<comment type="similarity">
    <text evidence="3">Belongs to the DegT/DnrJ/EryC1 family.</text>
</comment>
<name>Y3402_MYCTU</name>
<keyword id="KW-0663">Pyridoxal phosphate</keyword>
<keyword id="KW-1185">Reference proteome</keyword>
<accession>P9WGJ7</accession>
<accession>L0TCN5</accession>
<accession>Q50723</accession>
<gene>
    <name type="ordered locus">Rv3402c</name>
    <name type="ORF">MTCY78.26</name>
</gene>
<proteinExistence type="evidence at transcript level"/>